<keyword id="KW-0315">Glutamine amidotransferase</keyword>
<keyword id="KW-0378">Hydrolase</keyword>
<keyword id="KW-0456">Lyase</keyword>
<keyword id="KW-0663">Pyridoxal phosphate</keyword>
<protein>
    <recommendedName>
        <fullName evidence="1">Pyridoxal 5'-phosphate synthase subunit PdxT</fullName>
        <ecNumber evidence="1">4.3.3.6</ecNumber>
    </recommendedName>
    <alternativeName>
        <fullName evidence="1">Pdx2</fullName>
    </alternativeName>
    <alternativeName>
        <fullName evidence="1">Pyridoxal 5'-phosphate synthase glutaminase subunit</fullName>
        <ecNumber evidence="1">3.5.1.2</ecNumber>
    </alternativeName>
</protein>
<comment type="function">
    <text evidence="1">Catalyzes the hydrolysis of glutamine to glutamate and ammonia as part of the biosynthesis of pyridoxal 5'-phosphate. The resulting ammonia molecule is channeled to the active site of PdxS.</text>
</comment>
<comment type="catalytic activity">
    <reaction evidence="1">
        <text>aldehydo-D-ribose 5-phosphate + D-glyceraldehyde 3-phosphate + L-glutamine = pyridoxal 5'-phosphate + L-glutamate + phosphate + 3 H2O + H(+)</text>
        <dbReference type="Rhea" id="RHEA:31507"/>
        <dbReference type="ChEBI" id="CHEBI:15377"/>
        <dbReference type="ChEBI" id="CHEBI:15378"/>
        <dbReference type="ChEBI" id="CHEBI:29985"/>
        <dbReference type="ChEBI" id="CHEBI:43474"/>
        <dbReference type="ChEBI" id="CHEBI:58273"/>
        <dbReference type="ChEBI" id="CHEBI:58359"/>
        <dbReference type="ChEBI" id="CHEBI:59776"/>
        <dbReference type="ChEBI" id="CHEBI:597326"/>
        <dbReference type="EC" id="4.3.3.6"/>
    </reaction>
</comment>
<comment type="catalytic activity">
    <reaction evidence="1">
        <text>L-glutamine + H2O = L-glutamate + NH4(+)</text>
        <dbReference type="Rhea" id="RHEA:15889"/>
        <dbReference type="ChEBI" id="CHEBI:15377"/>
        <dbReference type="ChEBI" id="CHEBI:28938"/>
        <dbReference type="ChEBI" id="CHEBI:29985"/>
        <dbReference type="ChEBI" id="CHEBI:58359"/>
        <dbReference type="EC" id="3.5.1.2"/>
    </reaction>
</comment>
<comment type="pathway">
    <text evidence="1">Cofactor biosynthesis; pyridoxal 5'-phosphate biosynthesis.</text>
</comment>
<comment type="subunit">
    <text evidence="1">In the presence of PdxS, forms a dodecamer of heterodimers. Only shows activity in the heterodimer.</text>
</comment>
<comment type="similarity">
    <text evidence="1">Belongs to the glutaminase PdxT/SNO family.</text>
</comment>
<gene>
    <name evidence="1" type="primary">pdxT</name>
    <name type="ordered locus">SGR_6013</name>
</gene>
<reference key="1">
    <citation type="journal article" date="2008" name="J. Bacteriol.">
        <title>Genome sequence of the streptomycin-producing microorganism Streptomyces griseus IFO 13350.</title>
        <authorList>
            <person name="Ohnishi Y."/>
            <person name="Ishikawa J."/>
            <person name="Hara H."/>
            <person name="Suzuki H."/>
            <person name="Ikenoya M."/>
            <person name="Ikeda H."/>
            <person name="Yamashita A."/>
            <person name="Hattori M."/>
            <person name="Horinouchi S."/>
        </authorList>
    </citation>
    <scope>NUCLEOTIDE SEQUENCE [LARGE SCALE GENOMIC DNA]</scope>
    <source>
        <strain>JCM 4626 / CBS 651.72 / NBRC 13350 / KCC S-0626 / ISP 5235</strain>
    </source>
</reference>
<evidence type="ECO:0000255" key="1">
    <source>
        <dbReference type="HAMAP-Rule" id="MF_01615"/>
    </source>
</evidence>
<feature type="chain" id="PRO_1000185900" description="Pyridoxal 5'-phosphate synthase subunit PdxT">
    <location>
        <begin position="1"/>
        <end position="197"/>
    </location>
</feature>
<feature type="active site" description="Nucleophile" evidence="1">
    <location>
        <position position="82"/>
    </location>
</feature>
<feature type="active site" description="Charge relay system" evidence="1">
    <location>
        <position position="176"/>
    </location>
</feature>
<feature type="active site" description="Charge relay system" evidence="1">
    <location>
        <position position="178"/>
    </location>
</feature>
<feature type="binding site" evidence="1">
    <location>
        <begin position="50"/>
        <end position="52"/>
    </location>
    <ligand>
        <name>L-glutamine</name>
        <dbReference type="ChEBI" id="CHEBI:58359"/>
    </ligand>
</feature>
<feature type="binding site" evidence="1">
    <location>
        <position position="111"/>
    </location>
    <ligand>
        <name>L-glutamine</name>
        <dbReference type="ChEBI" id="CHEBI:58359"/>
    </ligand>
</feature>
<feature type="binding site" evidence="1">
    <location>
        <begin position="140"/>
        <end position="141"/>
    </location>
    <ligand>
        <name>L-glutamine</name>
        <dbReference type="ChEBI" id="CHEBI:58359"/>
    </ligand>
</feature>
<proteinExistence type="inferred from homology"/>
<sequence length="197" mass="21026">MSDTPVIGVLALQGDVREHLIALASADALARPVRRPEELAEVDGLVIPGGESTTMSKLAVLFGMMEPLRERVRAGMPVYGTCAGMILLAEKILDPRSGQETVGGIDMIVRRNAFGRQNESFEAAVEVGGVEGGPVDGVFIRAPWVESVGARTEVIAEHGGHIVAVRQENALATSFHPELTGDHRVHALFVDMVRAVN</sequence>
<dbReference type="EC" id="4.3.3.6" evidence="1"/>
<dbReference type="EC" id="3.5.1.2" evidence="1"/>
<dbReference type="EMBL" id="AP009493">
    <property type="protein sequence ID" value="BAG22842.1"/>
    <property type="molecule type" value="Genomic_DNA"/>
</dbReference>
<dbReference type="RefSeq" id="WP_012381670.1">
    <property type="nucleotide sequence ID" value="NC_010572.1"/>
</dbReference>
<dbReference type="SMR" id="B1W3G0"/>
<dbReference type="MEROPS" id="C26.A32"/>
<dbReference type="KEGG" id="sgr:SGR_6013"/>
<dbReference type="PATRIC" id="fig|455632.4.peg.6164"/>
<dbReference type="eggNOG" id="COG0311">
    <property type="taxonomic scope" value="Bacteria"/>
</dbReference>
<dbReference type="HOGENOM" id="CLU_069674_2_0_11"/>
<dbReference type="UniPathway" id="UPA00245"/>
<dbReference type="Proteomes" id="UP000001685">
    <property type="component" value="Chromosome"/>
</dbReference>
<dbReference type="GO" id="GO:0005829">
    <property type="term" value="C:cytosol"/>
    <property type="evidence" value="ECO:0007669"/>
    <property type="project" value="TreeGrafter"/>
</dbReference>
<dbReference type="GO" id="GO:1903600">
    <property type="term" value="C:glutaminase complex"/>
    <property type="evidence" value="ECO:0007669"/>
    <property type="project" value="TreeGrafter"/>
</dbReference>
<dbReference type="GO" id="GO:0004359">
    <property type="term" value="F:glutaminase activity"/>
    <property type="evidence" value="ECO:0007669"/>
    <property type="project" value="UniProtKB-UniRule"/>
</dbReference>
<dbReference type="GO" id="GO:0036381">
    <property type="term" value="F:pyridoxal 5'-phosphate synthase (glutamine hydrolysing) activity"/>
    <property type="evidence" value="ECO:0007669"/>
    <property type="project" value="UniProtKB-UniRule"/>
</dbReference>
<dbReference type="GO" id="GO:0006543">
    <property type="term" value="P:glutamine catabolic process"/>
    <property type="evidence" value="ECO:0007669"/>
    <property type="project" value="UniProtKB-UniRule"/>
</dbReference>
<dbReference type="GO" id="GO:0042823">
    <property type="term" value="P:pyridoxal phosphate biosynthetic process"/>
    <property type="evidence" value="ECO:0007669"/>
    <property type="project" value="UniProtKB-UniRule"/>
</dbReference>
<dbReference type="GO" id="GO:0008614">
    <property type="term" value="P:pyridoxine metabolic process"/>
    <property type="evidence" value="ECO:0007669"/>
    <property type="project" value="TreeGrafter"/>
</dbReference>
<dbReference type="CDD" id="cd01749">
    <property type="entry name" value="GATase1_PB"/>
    <property type="match status" value="1"/>
</dbReference>
<dbReference type="FunFam" id="3.40.50.880:FF:000010">
    <property type="entry name" value="uncharacterized protein LOC100176842 isoform X2"/>
    <property type="match status" value="1"/>
</dbReference>
<dbReference type="Gene3D" id="3.40.50.880">
    <property type="match status" value="1"/>
</dbReference>
<dbReference type="HAMAP" id="MF_01615">
    <property type="entry name" value="PdxT"/>
    <property type="match status" value="1"/>
</dbReference>
<dbReference type="InterPro" id="IPR029062">
    <property type="entry name" value="Class_I_gatase-like"/>
</dbReference>
<dbReference type="InterPro" id="IPR002161">
    <property type="entry name" value="PdxT/SNO"/>
</dbReference>
<dbReference type="InterPro" id="IPR021196">
    <property type="entry name" value="PdxT/SNO_CS"/>
</dbReference>
<dbReference type="NCBIfam" id="TIGR03800">
    <property type="entry name" value="PLP_synth_Pdx2"/>
    <property type="match status" value="1"/>
</dbReference>
<dbReference type="PANTHER" id="PTHR31559">
    <property type="entry name" value="PYRIDOXAL 5'-PHOSPHATE SYNTHASE SUBUNIT SNO"/>
    <property type="match status" value="1"/>
</dbReference>
<dbReference type="PANTHER" id="PTHR31559:SF0">
    <property type="entry name" value="PYRIDOXAL 5'-PHOSPHATE SYNTHASE SUBUNIT SNO1-RELATED"/>
    <property type="match status" value="1"/>
</dbReference>
<dbReference type="Pfam" id="PF01174">
    <property type="entry name" value="SNO"/>
    <property type="match status" value="1"/>
</dbReference>
<dbReference type="PIRSF" id="PIRSF005639">
    <property type="entry name" value="Glut_amidoT_SNO"/>
    <property type="match status" value="1"/>
</dbReference>
<dbReference type="SUPFAM" id="SSF52317">
    <property type="entry name" value="Class I glutamine amidotransferase-like"/>
    <property type="match status" value="1"/>
</dbReference>
<dbReference type="PROSITE" id="PS01236">
    <property type="entry name" value="PDXT_SNO_1"/>
    <property type="match status" value="1"/>
</dbReference>
<dbReference type="PROSITE" id="PS51130">
    <property type="entry name" value="PDXT_SNO_2"/>
    <property type="match status" value="1"/>
</dbReference>
<organism>
    <name type="scientific">Streptomyces griseus subsp. griseus (strain JCM 4626 / CBS 651.72 / NBRC 13350 / KCC S-0626 / ISP 5235)</name>
    <dbReference type="NCBI Taxonomy" id="455632"/>
    <lineage>
        <taxon>Bacteria</taxon>
        <taxon>Bacillati</taxon>
        <taxon>Actinomycetota</taxon>
        <taxon>Actinomycetes</taxon>
        <taxon>Kitasatosporales</taxon>
        <taxon>Streptomycetaceae</taxon>
        <taxon>Streptomyces</taxon>
    </lineage>
</organism>
<name>PDXT_STRGG</name>
<accession>B1W3G0</accession>